<proteinExistence type="inferred from homology"/>
<dbReference type="EC" id="6.1.1.20" evidence="1"/>
<dbReference type="EMBL" id="CP001402">
    <property type="protein sequence ID" value="ACR42632.1"/>
    <property type="molecule type" value="Genomic_DNA"/>
</dbReference>
<dbReference type="RefSeq" id="WP_012711990.1">
    <property type="nucleotide sequence ID" value="NC_012726.1"/>
</dbReference>
<dbReference type="SMR" id="C4KJ68"/>
<dbReference type="GeneID" id="15298408"/>
<dbReference type="GeneID" id="84062334"/>
<dbReference type="KEGG" id="sid:M164_2030"/>
<dbReference type="HOGENOM" id="CLU_020279_3_0_2"/>
<dbReference type="Proteomes" id="UP000001479">
    <property type="component" value="Chromosome"/>
</dbReference>
<dbReference type="GO" id="GO:0009328">
    <property type="term" value="C:phenylalanine-tRNA ligase complex"/>
    <property type="evidence" value="ECO:0007669"/>
    <property type="project" value="TreeGrafter"/>
</dbReference>
<dbReference type="GO" id="GO:0005524">
    <property type="term" value="F:ATP binding"/>
    <property type="evidence" value="ECO:0007669"/>
    <property type="project" value="UniProtKB-UniRule"/>
</dbReference>
<dbReference type="GO" id="GO:0000287">
    <property type="term" value="F:magnesium ion binding"/>
    <property type="evidence" value="ECO:0007669"/>
    <property type="project" value="InterPro"/>
</dbReference>
<dbReference type="GO" id="GO:0004826">
    <property type="term" value="F:phenylalanine-tRNA ligase activity"/>
    <property type="evidence" value="ECO:0007669"/>
    <property type="project" value="UniProtKB-UniRule"/>
</dbReference>
<dbReference type="GO" id="GO:0003723">
    <property type="term" value="F:RNA binding"/>
    <property type="evidence" value="ECO:0007669"/>
    <property type="project" value="InterPro"/>
</dbReference>
<dbReference type="GO" id="GO:0006432">
    <property type="term" value="P:phenylalanyl-tRNA aminoacylation"/>
    <property type="evidence" value="ECO:0007669"/>
    <property type="project" value="UniProtKB-UniRule"/>
</dbReference>
<dbReference type="CDD" id="cd00769">
    <property type="entry name" value="PheRS_beta_core"/>
    <property type="match status" value="1"/>
</dbReference>
<dbReference type="FunFam" id="3.30.56.10:FF:000014">
    <property type="entry name" value="Phenylalanine--tRNA ligase beta subunit"/>
    <property type="match status" value="1"/>
</dbReference>
<dbReference type="Gene3D" id="3.30.56.10">
    <property type="match status" value="2"/>
</dbReference>
<dbReference type="Gene3D" id="3.30.930.10">
    <property type="entry name" value="Bira Bifunctional Protein, Domain 2"/>
    <property type="match status" value="1"/>
</dbReference>
<dbReference type="Gene3D" id="3.50.40.10">
    <property type="entry name" value="Phenylalanyl-trna Synthetase, Chain B, domain 3"/>
    <property type="match status" value="1"/>
</dbReference>
<dbReference type="HAMAP" id="MF_00284">
    <property type="entry name" value="Phe_tRNA_synth_beta2"/>
    <property type="match status" value="1"/>
</dbReference>
<dbReference type="InterPro" id="IPR045864">
    <property type="entry name" value="aa-tRNA-synth_II/BPL/LPL"/>
</dbReference>
<dbReference type="InterPro" id="IPR005146">
    <property type="entry name" value="B3/B4_tRNA-bd"/>
</dbReference>
<dbReference type="InterPro" id="IPR009061">
    <property type="entry name" value="DNA-bd_dom_put_sf"/>
</dbReference>
<dbReference type="InterPro" id="IPR045060">
    <property type="entry name" value="Phe-tRNA-ligase_IIc_bsu"/>
</dbReference>
<dbReference type="InterPro" id="IPR004531">
    <property type="entry name" value="Phe-tRNA-synth_IIc_bsu_arc_euk"/>
</dbReference>
<dbReference type="InterPro" id="IPR020825">
    <property type="entry name" value="Phe-tRNA_synthase-like_B3/B4"/>
</dbReference>
<dbReference type="InterPro" id="IPR022918">
    <property type="entry name" value="Phe_tRNA_ligase_beta2_arc"/>
</dbReference>
<dbReference type="InterPro" id="IPR041616">
    <property type="entry name" value="PheRS_beta_core"/>
</dbReference>
<dbReference type="InterPro" id="IPR005147">
    <property type="entry name" value="tRNA_synthase_B5-dom"/>
</dbReference>
<dbReference type="NCBIfam" id="TIGR00471">
    <property type="entry name" value="pheT_arch"/>
    <property type="match status" value="1"/>
</dbReference>
<dbReference type="PANTHER" id="PTHR10947:SF0">
    <property type="entry name" value="PHENYLALANINE--TRNA LIGASE BETA SUBUNIT"/>
    <property type="match status" value="1"/>
</dbReference>
<dbReference type="PANTHER" id="PTHR10947">
    <property type="entry name" value="PHENYLALANYL-TRNA SYNTHETASE BETA CHAIN AND LEUCINE-RICH REPEAT-CONTAINING PROTEIN 47"/>
    <property type="match status" value="1"/>
</dbReference>
<dbReference type="Pfam" id="PF03484">
    <property type="entry name" value="B5"/>
    <property type="match status" value="1"/>
</dbReference>
<dbReference type="Pfam" id="PF17759">
    <property type="entry name" value="tRNA_synthFbeta"/>
    <property type="match status" value="1"/>
</dbReference>
<dbReference type="SMART" id="SM00873">
    <property type="entry name" value="B3_4"/>
    <property type="match status" value="1"/>
</dbReference>
<dbReference type="SMART" id="SM00874">
    <property type="entry name" value="B5"/>
    <property type="match status" value="1"/>
</dbReference>
<dbReference type="SUPFAM" id="SSF55681">
    <property type="entry name" value="Class II aaRS and biotin synthetases"/>
    <property type="match status" value="1"/>
</dbReference>
<dbReference type="SUPFAM" id="SSF46955">
    <property type="entry name" value="Putative DNA-binding domain"/>
    <property type="match status" value="2"/>
</dbReference>
<dbReference type="PROSITE" id="PS51483">
    <property type="entry name" value="B5"/>
    <property type="match status" value="1"/>
</dbReference>
<organism>
    <name type="scientific">Saccharolobus islandicus (strain M.16.4 / Kamchatka #3)</name>
    <name type="common">Sulfolobus islandicus</name>
    <dbReference type="NCBI Taxonomy" id="426118"/>
    <lineage>
        <taxon>Archaea</taxon>
        <taxon>Thermoproteota</taxon>
        <taxon>Thermoprotei</taxon>
        <taxon>Sulfolobales</taxon>
        <taxon>Sulfolobaceae</taxon>
        <taxon>Saccharolobus</taxon>
    </lineage>
</organism>
<protein>
    <recommendedName>
        <fullName evidence="1">Phenylalanine--tRNA ligase beta subunit</fullName>
        <ecNumber evidence="1">6.1.1.20</ecNumber>
    </recommendedName>
    <alternativeName>
        <fullName evidence="1">Phenylalanyl-tRNA synthetase beta subunit</fullName>
        <shortName evidence="1">PheRS</shortName>
    </alternativeName>
</protein>
<evidence type="ECO:0000255" key="1">
    <source>
        <dbReference type="HAMAP-Rule" id="MF_00284"/>
    </source>
</evidence>
<sequence>MVTIVLNKYKLLDKIHIGQQKLEDLLFNLKSEVKPIDENNIEIEINADRLDLLSSDGIARAIKGLLEKELGEAKYNVTDTEYTLIVDNVRTRPYALAAVVYNAKIDLEELIQFQEKLHGTIGRKRKKVAIGIHDLRKVDSKTIEYKEVPLSYKFVPLYENKELTISEILEKTEQGKLYGNISIANGVSPAIVQDDGEVLSIPPIINSNKTRLDENTKDFFIDVTGTSFEAVAQTLDIIVSNLAEAGGTIGRVKVLKSANFSQLSSPLFLHKIQNVREEYVKKILGIKTSKEEICKHVMRMRMNCDIENGVIRVTVPQYRVDILNEIDVVEDIAMSIGYNNLEPSKYISTNYGSYDYMTLLERKIRELGIGAGYVEISNFVLIKDEKLFSNKYVKILNPVTDEYNAVRNSLIPGLLDFLSKNQHAKFPIRVFETGDVVVYDSSTDTGFRNDKRAAYAIMDNKVSYEDIQAPIHYILKSLGLEVNYKEENNNIFIEGRSASIFYENEKMGVIGEVNPDVLIRFGIEYPAVIAELYISEIAKRLTNQR</sequence>
<comment type="catalytic activity">
    <reaction evidence="1">
        <text>tRNA(Phe) + L-phenylalanine + ATP = L-phenylalanyl-tRNA(Phe) + AMP + diphosphate + H(+)</text>
        <dbReference type="Rhea" id="RHEA:19413"/>
        <dbReference type="Rhea" id="RHEA-COMP:9668"/>
        <dbReference type="Rhea" id="RHEA-COMP:9699"/>
        <dbReference type="ChEBI" id="CHEBI:15378"/>
        <dbReference type="ChEBI" id="CHEBI:30616"/>
        <dbReference type="ChEBI" id="CHEBI:33019"/>
        <dbReference type="ChEBI" id="CHEBI:58095"/>
        <dbReference type="ChEBI" id="CHEBI:78442"/>
        <dbReference type="ChEBI" id="CHEBI:78531"/>
        <dbReference type="ChEBI" id="CHEBI:456215"/>
        <dbReference type="EC" id="6.1.1.20"/>
    </reaction>
</comment>
<comment type="cofactor">
    <cofactor evidence="1">
        <name>Mg(2+)</name>
        <dbReference type="ChEBI" id="CHEBI:18420"/>
    </cofactor>
</comment>
<comment type="subunit">
    <text evidence="1">Tetramer of two alpha and two beta subunits.</text>
</comment>
<comment type="subcellular location">
    <subcellularLocation>
        <location evidence="1">Cytoplasm</location>
    </subcellularLocation>
</comment>
<comment type="similarity">
    <text evidence="1">Belongs to the phenylalanyl-tRNA synthetase beta subunit family. Type 2 subfamily.</text>
</comment>
<reference key="1">
    <citation type="journal article" date="2009" name="Proc. Natl. Acad. Sci. U.S.A.">
        <title>Biogeography of the Sulfolobus islandicus pan-genome.</title>
        <authorList>
            <person name="Reno M.L."/>
            <person name="Held N.L."/>
            <person name="Fields C.J."/>
            <person name="Burke P.V."/>
            <person name="Whitaker R.J."/>
        </authorList>
    </citation>
    <scope>NUCLEOTIDE SEQUENCE [LARGE SCALE GENOMIC DNA]</scope>
    <source>
        <strain>M.16.4 / Kamchatka #3</strain>
    </source>
</reference>
<gene>
    <name evidence="1" type="primary">pheT</name>
    <name type="ordered locus">M164_2030</name>
</gene>
<keyword id="KW-0030">Aminoacyl-tRNA synthetase</keyword>
<keyword id="KW-0067">ATP-binding</keyword>
<keyword id="KW-0963">Cytoplasm</keyword>
<keyword id="KW-0436">Ligase</keyword>
<keyword id="KW-0460">Magnesium</keyword>
<keyword id="KW-0479">Metal-binding</keyword>
<keyword id="KW-0547">Nucleotide-binding</keyword>
<keyword id="KW-0648">Protein biosynthesis</keyword>
<name>SYFB_SACI6</name>
<accession>C4KJ68</accession>
<feature type="chain" id="PRO_1000204843" description="Phenylalanine--tRNA ligase beta subunit">
    <location>
        <begin position="1"/>
        <end position="545"/>
    </location>
</feature>
<feature type="domain" description="B5" evidence="1">
    <location>
        <begin position="268"/>
        <end position="343"/>
    </location>
</feature>
<feature type="binding site" evidence="1">
    <location>
        <position position="321"/>
    </location>
    <ligand>
        <name>Mg(2+)</name>
        <dbReference type="ChEBI" id="CHEBI:18420"/>
        <note>shared with alpha subunit</note>
    </ligand>
</feature>
<feature type="binding site" evidence="1">
    <location>
        <position position="327"/>
    </location>
    <ligand>
        <name>Mg(2+)</name>
        <dbReference type="ChEBI" id="CHEBI:18420"/>
        <note>shared with alpha subunit</note>
    </ligand>
</feature>
<feature type="binding site" evidence="1">
    <location>
        <position position="330"/>
    </location>
    <ligand>
        <name>Mg(2+)</name>
        <dbReference type="ChEBI" id="CHEBI:18420"/>
        <note>shared with alpha subunit</note>
    </ligand>
</feature>
<feature type="binding site" evidence="1">
    <location>
        <position position="331"/>
    </location>
    <ligand>
        <name>Mg(2+)</name>
        <dbReference type="ChEBI" id="CHEBI:18420"/>
        <note>shared with alpha subunit</note>
    </ligand>
</feature>